<dbReference type="EC" id="7.1.1.-" evidence="1"/>
<dbReference type="EMBL" id="CP000251">
    <property type="protein sequence ID" value="ABC82345.1"/>
    <property type="status" value="ALT_INIT"/>
    <property type="molecule type" value="Genomic_DNA"/>
</dbReference>
<dbReference type="RefSeq" id="WP_011421627.1">
    <property type="nucleotide sequence ID" value="NC_007760.1"/>
</dbReference>
<dbReference type="SMR" id="Q2IL15"/>
<dbReference type="STRING" id="290397.Adeh_2575"/>
<dbReference type="KEGG" id="ade:Adeh_2575"/>
<dbReference type="eggNOG" id="COG1005">
    <property type="taxonomic scope" value="Bacteria"/>
</dbReference>
<dbReference type="HOGENOM" id="CLU_015134_0_1_7"/>
<dbReference type="OrthoDB" id="9803734at2"/>
<dbReference type="Proteomes" id="UP000001935">
    <property type="component" value="Chromosome"/>
</dbReference>
<dbReference type="GO" id="GO:0005886">
    <property type="term" value="C:plasma membrane"/>
    <property type="evidence" value="ECO:0007669"/>
    <property type="project" value="UniProtKB-SubCell"/>
</dbReference>
<dbReference type="GO" id="GO:0003954">
    <property type="term" value="F:NADH dehydrogenase activity"/>
    <property type="evidence" value="ECO:0007669"/>
    <property type="project" value="TreeGrafter"/>
</dbReference>
<dbReference type="GO" id="GO:0016655">
    <property type="term" value="F:oxidoreductase activity, acting on NAD(P)H, quinone or similar compound as acceptor"/>
    <property type="evidence" value="ECO:0007669"/>
    <property type="project" value="UniProtKB-UniRule"/>
</dbReference>
<dbReference type="GO" id="GO:0048038">
    <property type="term" value="F:quinone binding"/>
    <property type="evidence" value="ECO:0007669"/>
    <property type="project" value="UniProtKB-KW"/>
</dbReference>
<dbReference type="GO" id="GO:0009060">
    <property type="term" value="P:aerobic respiration"/>
    <property type="evidence" value="ECO:0007669"/>
    <property type="project" value="TreeGrafter"/>
</dbReference>
<dbReference type="HAMAP" id="MF_01350">
    <property type="entry name" value="NDH1_NuoH"/>
    <property type="match status" value="1"/>
</dbReference>
<dbReference type="InterPro" id="IPR001694">
    <property type="entry name" value="NADH_UbQ_OxRdtase_su1/FPO"/>
</dbReference>
<dbReference type="InterPro" id="IPR018086">
    <property type="entry name" value="NADH_UbQ_OxRdtase_su1_CS"/>
</dbReference>
<dbReference type="PANTHER" id="PTHR11432">
    <property type="entry name" value="NADH DEHYDROGENASE SUBUNIT 1"/>
    <property type="match status" value="1"/>
</dbReference>
<dbReference type="PANTHER" id="PTHR11432:SF3">
    <property type="entry name" value="NADH-UBIQUINONE OXIDOREDUCTASE CHAIN 1"/>
    <property type="match status" value="1"/>
</dbReference>
<dbReference type="Pfam" id="PF00146">
    <property type="entry name" value="NADHdh"/>
    <property type="match status" value="1"/>
</dbReference>
<dbReference type="PROSITE" id="PS00667">
    <property type="entry name" value="COMPLEX1_ND1_1"/>
    <property type="match status" value="1"/>
</dbReference>
<dbReference type="PROSITE" id="PS00668">
    <property type="entry name" value="COMPLEX1_ND1_2"/>
    <property type="match status" value="1"/>
</dbReference>
<evidence type="ECO:0000255" key="1">
    <source>
        <dbReference type="HAMAP-Rule" id="MF_01350"/>
    </source>
</evidence>
<evidence type="ECO:0000305" key="2"/>
<keyword id="KW-0997">Cell inner membrane</keyword>
<keyword id="KW-1003">Cell membrane</keyword>
<keyword id="KW-0472">Membrane</keyword>
<keyword id="KW-0520">NAD</keyword>
<keyword id="KW-0874">Quinone</keyword>
<keyword id="KW-1185">Reference proteome</keyword>
<keyword id="KW-1278">Translocase</keyword>
<keyword id="KW-0812">Transmembrane</keyword>
<keyword id="KW-1133">Transmembrane helix</keyword>
<keyword id="KW-0830">Ubiquinone</keyword>
<organism>
    <name type="scientific">Anaeromyxobacter dehalogenans (strain 2CP-C)</name>
    <dbReference type="NCBI Taxonomy" id="290397"/>
    <lineage>
        <taxon>Bacteria</taxon>
        <taxon>Pseudomonadati</taxon>
        <taxon>Myxococcota</taxon>
        <taxon>Myxococcia</taxon>
        <taxon>Myxococcales</taxon>
        <taxon>Cystobacterineae</taxon>
        <taxon>Anaeromyxobacteraceae</taxon>
        <taxon>Anaeromyxobacter</taxon>
    </lineage>
</organism>
<gene>
    <name evidence="1" type="primary">nuoH</name>
    <name type="ordered locus">Adeh_2575</name>
</gene>
<sequence>MLAAALRAAGVDVSGWSQTGQYALWLVAMAVLALILVSFGAVISGMTVWWEMRVSARMQSRIGYNRVGAAGFFQWIADAVKLLLKEDLIPADADRLLFRAAPYFVLVGFALVFVALPFGESLIAADLNVGIFYITAVTALVVVGILVAGWSSNSKWALFGGMRSAAQVISYEIPAGLAVMVPVLMSGTLSMQGIIRSQGAWPWEWHALTNPFAMVAFAIFFVAQLAEGNRTPFDLPEAESELVAGYLSEYSAFRFALFFLVEFGNLWVMSAISVTLFFGGWQVPFAGPEVFAAARGAGDLPGLAWWGLQLASMLVFVAKTLVLLNVVVWVRWTLPRIRVDQMMSLCWKYLVPFAFVCFVATLLWQILVARVPATAPVVGGLMLVAAIVAGFSFLRLTRRNISAVGDRVDFTNW</sequence>
<name>NUOH_ANADE</name>
<accession>Q2IL15</accession>
<protein>
    <recommendedName>
        <fullName evidence="1">NADH-quinone oxidoreductase subunit H</fullName>
        <ecNumber evidence="1">7.1.1.-</ecNumber>
    </recommendedName>
    <alternativeName>
        <fullName evidence="1">NADH dehydrogenase I subunit H</fullName>
    </alternativeName>
    <alternativeName>
        <fullName evidence="1">NDH-1 subunit H</fullName>
    </alternativeName>
</protein>
<comment type="function">
    <text evidence="1">NDH-1 shuttles electrons from NADH, via FMN and iron-sulfur (Fe-S) centers, to quinones in the respiratory chain. The immediate electron acceptor for the enzyme in this species is believed to be ubiquinone. Couples the redox reaction to proton translocation (for every two electrons transferred, four hydrogen ions are translocated across the cytoplasmic membrane), and thus conserves the redox energy in a proton gradient. This subunit may bind ubiquinone.</text>
</comment>
<comment type="catalytic activity">
    <reaction evidence="1">
        <text>a quinone + NADH + 5 H(+)(in) = a quinol + NAD(+) + 4 H(+)(out)</text>
        <dbReference type="Rhea" id="RHEA:57888"/>
        <dbReference type="ChEBI" id="CHEBI:15378"/>
        <dbReference type="ChEBI" id="CHEBI:24646"/>
        <dbReference type="ChEBI" id="CHEBI:57540"/>
        <dbReference type="ChEBI" id="CHEBI:57945"/>
        <dbReference type="ChEBI" id="CHEBI:132124"/>
    </reaction>
</comment>
<comment type="subunit">
    <text evidence="1">NDH-1 is composed of 14 different subunits. Subunits NuoA, H, J, K, L, M, N constitute the membrane sector of the complex.</text>
</comment>
<comment type="subcellular location">
    <subcellularLocation>
        <location evidence="1">Cell inner membrane</location>
        <topology evidence="1">Multi-pass membrane protein</topology>
    </subcellularLocation>
</comment>
<comment type="similarity">
    <text evidence="1">Belongs to the complex I subunit 1 family.</text>
</comment>
<comment type="sequence caution" evidence="2">
    <conflict type="erroneous initiation">
        <sequence resource="EMBL-CDS" id="ABC82345"/>
    </conflict>
</comment>
<proteinExistence type="inferred from homology"/>
<feature type="chain" id="PRO_0000240052" description="NADH-quinone oxidoreductase subunit H">
    <location>
        <begin position="1"/>
        <end position="413"/>
    </location>
</feature>
<feature type="transmembrane region" description="Helical" evidence="1">
    <location>
        <begin position="23"/>
        <end position="43"/>
    </location>
</feature>
<feature type="transmembrane region" description="Helical" evidence="1">
    <location>
        <begin position="104"/>
        <end position="124"/>
    </location>
</feature>
<feature type="transmembrane region" description="Helical" evidence="1">
    <location>
        <begin position="129"/>
        <end position="149"/>
    </location>
</feature>
<feature type="transmembrane region" description="Helical" evidence="1">
    <location>
        <begin position="175"/>
        <end position="195"/>
    </location>
</feature>
<feature type="transmembrane region" description="Helical" evidence="1">
    <location>
        <begin position="205"/>
        <end position="225"/>
    </location>
</feature>
<feature type="transmembrane region" description="Helical" evidence="1">
    <location>
        <begin position="258"/>
        <end position="278"/>
    </location>
</feature>
<feature type="transmembrane region" description="Helical" evidence="1">
    <location>
        <begin position="310"/>
        <end position="330"/>
    </location>
</feature>
<feature type="transmembrane region" description="Helical" evidence="1">
    <location>
        <begin position="349"/>
        <end position="369"/>
    </location>
</feature>
<feature type="transmembrane region" description="Helical" evidence="1">
    <location>
        <begin position="374"/>
        <end position="394"/>
    </location>
</feature>
<reference key="1">
    <citation type="submission" date="2006-01" db="EMBL/GenBank/DDBJ databases">
        <title>Complete sequence of Anaeromyxobacter dehalogenans 2CP-C.</title>
        <authorList>
            <person name="Copeland A."/>
            <person name="Lucas S."/>
            <person name="Lapidus A."/>
            <person name="Barry K."/>
            <person name="Detter J.C."/>
            <person name="Glavina T."/>
            <person name="Hammon N."/>
            <person name="Israni S."/>
            <person name="Pitluck S."/>
            <person name="Brettin T."/>
            <person name="Bruce D."/>
            <person name="Han C."/>
            <person name="Tapia R."/>
            <person name="Gilna P."/>
            <person name="Kiss H."/>
            <person name="Schmutz J."/>
            <person name="Larimer F."/>
            <person name="Land M."/>
            <person name="Kyrpides N."/>
            <person name="Anderson I."/>
            <person name="Sanford R.A."/>
            <person name="Ritalahti K.M."/>
            <person name="Thomas H.S."/>
            <person name="Kirby J.R."/>
            <person name="Zhulin I.B."/>
            <person name="Loeffler F.E."/>
            <person name="Richardson P."/>
        </authorList>
    </citation>
    <scope>NUCLEOTIDE SEQUENCE [LARGE SCALE GENOMIC DNA]</scope>
    <source>
        <strain>2CP-C</strain>
    </source>
</reference>